<proteinExistence type="inferred from homology"/>
<protein>
    <recommendedName>
        <fullName>Nicotinamidase</fullName>
        <ecNumber>3.5.1.19</ecNumber>
    </recommendedName>
    <alternativeName>
        <fullName>Nicotinamide deamidase</fullName>
        <shortName>NAMase</shortName>
    </alternativeName>
</protein>
<organism>
    <name type="scientific">Schizosaccharomyces pombe (strain 972 / ATCC 24843)</name>
    <name type="common">Fission yeast</name>
    <dbReference type="NCBI Taxonomy" id="284812"/>
    <lineage>
        <taxon>Eukaryota</taxon>
        <taxon>Fungi</taxon>
        <taxon>Dikarya</taxon>
        <taxon>Ascomycota</taxon>
        <taxon>Taphrinomycotina</taxon>
        <taxon>Schizosaccharomycetes</taxon>
        <taxon>Schizosaccharomycetales</taxon>
        <taxon>Schizosaccharomycetaceae</taxon>
        <taxon>Schizosaccharomyces</taxon>
    </lineage>
</organism>
<keyword id="KW-0963">Cytoplasm</keyword>
<keyword id="KW-0378">Hydrolase</keyword>
<keyword id="KW-0479">Metal-binding</keyword>
<keyword id="KW-0539">Nucleus</keyword>
<keyword id="KW-0576">Peroxisome</keyword>
<keyword id="KW-0662">Pyridine nucleotide biosynthesis</keyword>
<keyword id="KW-1185">Reference proteome</keyword>
<keyword id="KW-0862">Zinc</keyword>
<accession>Q9USS0</accession>
<sequence>MSFHPALIIVDVQNDFVHPVYISSGESALEVVPVINRLLENDYKWDTVIATKDVHPKDHLSFTTSHSSTPKPSGTVVNIEAYGHVYKQTLWNSHCVENTPGCEFPDSLNGDRIEFVIPKGSDRLVESYSGFYDAIGRDNGLKAILDKKGITDVFIAGVATDICVKETALHARHWYNTYIISEAVKGSSTESHNQAIKDFRDAKIEVISEKDPILQSVRKV</sequence>
<evidence type="ECO:0000250" key="1"/>
<evidence type="ECO:0000250" key="2">
    <source>
        <dbReference type="UniProtKB" id="P53184"/>
    </source>
</evidence>
<evidence type="ECO:0000255" key="3"/>
<evidence type="ECO:0000269" key="4">
    <source>
    </source>
</evidence>
<evidence type="ECO:0000305" key="5"/>
<comment type="function">
    <text evidence="1">Catalyzes the deamidation of nicotinamide, an early step in the NAD(+) salvage pathway.</text>
</comment>
<comment type="catalytic activity">
    <reaction>
        <text>nicotinamide + H2O = nicotinate + NH4(+)</text>
        <dbReference type="Rhea" id="RHEA:14545"/>
        <dbReference type="ChEBI" id="CHEBI:15377"/>
        <dbReference type="ChEBI" id="CHEBI:17154"/>
        <dbReference type="ChEBI" id="CHEBI:28938"/>
        <dbReference type="ChEBI" id="CHEBI:32544"/>
        <dbReference type="EC" id="3.5.1.19"/>
    </reaction>
</comment>
<comment type="pathway">
    <text>Cofactor biosynthesis; nicotinate biosynthesis; nicotinate from nicotinamide: step 1/1.</text>
</comment>
<comment type="subcellular location">
    <subcellularLocation>
        <location evidence="4">Cytoplasm</location>
    </subcellularLocation>
    <subcellularLocation>
        <location evidence="4">Nucleus</location>
    </subcellularLocation>
    <subcellularLocation>
        <location evidence="2">Peroxisome</location>
    </subcellularLocation>
</comment>
<comment type="similarity">
    <text evidence="5">Belongs to the isochorismatase family.</text>
</comment>
<reference key="1">
    <citation type="journal article" date="2002" name="Nature">
        <title>The genome sequence of Schizosaccharomyces pombe.</title>
        <authorList>
            <person name="Wood V."/>
            <person name="Gwilliam R."/>
            <person name="Rajandream M.A."/>
            <person name="Lyne M.H."/>
            <person name="Lyne R."/>
            <person name="Stewart A."/>
            <person name="Sgouros J.G."/>
            <person name="Peat N."/>
            <person name="Hayles J."/>
            <person name="Baker S.G."/>
            <person name="Basham D."/>
            <person name="Bowman S."/>
            <person name="Brooks K."/>
            <person name="Brown D."/>
            <person name="Brown S."/>
            <person name="Chillingworth T."/>
            <person name="Churcher C.M."/>
            <person name="Collins M."/>
            <person name="Connor R."/>
            <person name="Cronin A."/>
            <person name="Davis P."/>
            <person name="Feltwell T."/>
            <person name="Fraser A."/>
            <person name="Gentles S."/>
            <person name="Goble A."/>
            <person name="Hamlin N."/>
            <person name="Harris D.E."/>
            <person name="Hidalgo J."/>
            <person name="Hodgson G."/>
            <person name="Holroyd S."/>
            <person name="Hornsby T."/>
            <person name="Howarth S."/>
            <person name="Huckle E.J."/>
            <person name="Hunt S."/>
            <person name="Jagels K."/>
            <person name="James K.D."/>
            <person name="Jones L."/>
            <person name="Jones M."/>
            <person name="Leather S."/>
            <person name="McDonald S."/>
            <person name="McLean J."/>
            <person name="Mooney P."/>
            <person name="Moule S."/>
            <person name="Mungall K.L."/>
            <person name="Murphy L.D."/>
            <person name="Niblett D."/>
            <person name="Odell C."/>
            <person name="Oliver K."/>
            <person name="O'Neil S."/>
            <person name="Pearson D."/>
            <person name="Quail M.A."/>
            <person name="Rabbinowitsch E."/>
            <person name="Rutherford K.M."/>
            <person name="Rutter S."/>
            <person name="Saunders D."/>
            <person name="Seeger K."/>
            <person name="Sharp S."/>
            <person name="Skelton J."/>
            <person name="Simmonds M.N."/>
            <person name="Squares R."/>
            <person name="Squares S."/>
            <person name="Stevens K."/>
            <person name="Taylor K."/>
            <person name="Taylor R.G."/>
            <person name="Tivey A."/>
            <person name="Walsh S.V."/>
            <person name="Warren T."/>
            <person name="Whitehead S."/>
            <person name="Woodward J.R."/>
            <person name="Volckaert G."/>
            <person name="Aert R."/>
            <person name="Robben J."/>
            <person name="Grymonprez B."/>
            <person name="Weltjens I."/>
            <person name="Vanstreels E."/>
            <person name="Rieger M."/>
            <person name="Schaefer M."/>
            <person name="Mueller-Auer S."/>
            <person name="Gabel C."/>
            <person name="Fuchs M."/>
            <person name="Duesterhoeft A."/>
            <person name="Fritzc C."/>
            <person name="Holzer E."/>
            <person name="Moestl D."/>
            <person name="Hilbert H."/>
            <person name="Borzym K."/>
            <person name="Langer I."/>
            <person name="Beck A."/>
            <person name="Lehrach H."/>
            <person name="Reinhardt R."/>
            <person name="Pohl T.M."/>
            <person name="Eger P."/>
            <person name="Zimmermann W."/>
            <person name="Wedler H."/>
            <person name="Wambutt R."/>
            <person name="Purnelle B."/>
            <person name="Goffeau A."/>
            <person name="Cadieu E."/>
            <person name="Dreano S."/>
            <person name="Gloux S."/>
            <person name="Lelaure V."/>
            <person name="Mottier S."/>
            <person name="Galibert F."/>
            <person name="Aves S.J."/>
            <person name="Xiang Z."/>
            <person name="Hunt C."/>
            <person name="Moore K."/>
            <person name="Hurst S.M."/>
            <person name="Lucas M."/>
            <person name="Rochet M."/>
            <person name="Gaillardin C."/>
            <person name="Tallada V.A."/>
            <person name="Garzon A."/>
            <person name="Thode G."/>
            <person name="Daga R.R."/>
            <person name="Cruzado L."/>
            <person name="Jimenez J."/>
            <person name="Sanchez M."/>
            <person name="del Rey F."/>
            <person name="Benito J."/>
            <person name="Dominguez A."/>
            <person name="Revuelta J.L."/>
            <person name="Moreno S."/>
            <person name="Armstrong J."/>
            <person name="Forsburg S.L."/>
            <person name="Cerutti L."/>
            <person name="Lowe T."/>
            <person name="McCombie W.R."/>
            <person name="Paulsen I."/>
            <person name="Potashkin J."/>
            <person name="Shpakovski G.V."/>
            <person name="Ussery D."/>
            <person name="Barrell B.G."/>
            <person name="Nurse P."/>
        </authorList>
    </citation>
    <scope>NUCLEOTIDE SEQUENCE [LARGE SCALE GENOMIC DNA]</scope>
    <source>
        <strain>972 / ATCC 24843</strain>
    </source>
</reference>
<reference key="2">
    <citation type="journal article" date="2006" name="Nat. Biotechnol.">
        <title>ORFeome cloning and global analysis of protein localization in the fission yeast Schizosaccharomyces pombe.</title>
        <authorList>
            <person name="Matsuyama A."/>
            <person name="Arai R."/>
            <person name="Yashiroda Y."/>
            <person name="Shirai A."/>
            <person name="Kamata A."/>
            <person name="Sekido S."/>
            <person name="Kobayashi Y."/>
            <person name="Hashimoto A."/>
            <person name="Hamamoto M."/>
            <person name="Hiraoka Y."/>
            <person name="Horinouchi S."/>
            <person name="Yoshida M."/>
        </authorList>
    </citation>
    <scope>SUBCELLULAR LOCATION [LARGE SCALE ANALYSIS]</scope>
</reference>
<name>PNC1_SCHPO</name>
<dbReference type="EC" id="3.5.1.19"/>
<dbReference type="EMBL" id="CU329671">
    <property type="protein sequence ID" value="CAB60673.2"/>
    <property type="molecule type" value="Genomic_DNA"/>
</dbReference>
<dbReference type="RefSeq" id="NP_596029.2">
    <property type="nucleotide sequence ID" value="NM_001021938.3"/>
</dbReference>
<dbReference type="SMR" id="Q9USS0"/>
<dbReference type="BioGRID" id="277422">
    <property type="interactions" value="7"/>
</dbReference>
<dbReference type="FunCoup" id="Q9USS0">
    <property type="interactions" value="55"/>
</dbReference>
<dbReference type="STRING" id="284812.Q9USS0"/>
<dbReference type="iPTMnet" id="Q9USS0"/>
<dbReference type="PaxDb" id="4896-SPBC365.20c.1"/>
<dbReference type="EnsemblFungi" id="SPBC365.20c.1">
    <property type="protein sequence ID" value="SPBC365.20c.1:pep"/>
    <property type="gene ID" value="SPBC365.20c"/>
</dbReference>
<dbReference type="GeneID" id="2540906"/>
<dbReference type="KEGG" id="spo:2540906"/>
<dbReference type="PomBase" id="SPBC365.20c">
    <property type="gene designation" value="pnc1"/>
</dbReference>
<dbReference type="VEuPathDB" id="FungiDB:SPBC365.20c"/>
<dbReference type="eggNOG" id="KOG4003">
    <property type="taxonomic scope" value="Eukaryota"/>
</dbReference>
<dbReference type="HOGENOM" id="CLU_068979_13_0_1"/>
<dbReference type="InParanoid" id="Q9USS0"/>
<dbReference type="OMA" id="HPPNHTS"/>
<dbReference type="PhylomeDB" id="Q9USS0"/>
<dbReference type="UniPathway" id="UPA00830">
    <property type="reaction ID" value="UER00790"/>
</dbReference>
<dbReference type="PRO" id="PR:Q9USS0"/>
<dbReference type="Proteomes" id="UP000002485">
    <property type="component" value="Chromosome II"/>
</dbReference>
<dbReference type="GO" id="GO:0005829">
    <property type="term" value="C:cytosol"/>
    <property type="evidence" value="ECO:0007005"/>
    <property type="project" value="PomBase"/>
</dbReference>
<dbReference type="GO" id="GO:0005634">
    <property type="term" value="C:nucleus"/>
    <property type="evidence" value="ECO:0007005"/>
    <property type="project" value="PomBase"/>
</dbReference>
<dbReference type="GO" id="GO:0005777">
    <property type="term" value="C:peroxisome"/>
    <property type="evidence" value="ECO:0007669"/>
    <property type="project" value="UniProtKB-SubCell"/>
</dbReference>
<dbReference type="GO" id="GO:0046872">
    <property type="term" value="F:metal ion binding"/>
    <property type="evidence" value="ECO:0007669"/>
    <property type="project" value="UniProtKB-KW"/>
</dbReference>
<dbReference type="GO" id="GO:0008936">
    <property type="term" value="F:nicotinamidase activity"/>
    <property type="evidence" value="ECO:0000266"/>
    <property type="project" value="PomBase"/>
</dbReference>
<dbReference type="GO" id="GO:0019358">
    <property type="term" value="P:nicotinate nucleotide salvage"/>
    <property type="evidence" value="ECO:0000266"/>
    <property type="project" value="PomBase"/>
</dbReference>
<dbReference type="Gene3D" id="3.40.50.850">
    <property type="entry name" value="Isochorismatase-like"/>
    <property type="match status" value="1"/>
</dbReference>
<dbReference type="InterPro" id="IPR000868">
    <property type="entry name" value="Isochorismatase-like_dom"/>
</dbReference>
<dbReference type="InterPro" id="IPR036380">
    <property type="entry name" value="Isochorismatase-like_sf"/>
</dbReference>
<dbReference type="InterPro" id="IPR052347">
    <property type="entry name" value="Isochorismatase_Nicotinamidase"/>
</dbReference>
<dbReference type="PANTHER" id="PTHR11080:SF2">
    <property type="entry name" value="LD05707P"/>
    <property type="match status" value="1"/>
</dbReference>
<dbReference type="PANTHER" id="PTHR11080">
    <property type="entry name" value="PYRAZINAMIDASE/NICOTINAMIDASE"/>
    <property type="match status" value="1"/>
</dbReference>
<dbReference type="Pfam" id="PF00857">
    <property type="entry name" value="Isochorismatase"/>
    <property type="match status" value="1"/>
</dbReference>
<dbReference type="SUPFAM" id="SSF52499">
    <property type="entry name" value="Isochorismatase-like hydrolases"/>
    <property type="match status" value="1"/>
</dbReference>
<gene>
    <name type="primary">pnc1</name>
    <name type="ORF">SPBC365.20c</name>
</gene>
<feature type="chain" id="PRO_0000371807" description="Nicotinamidase">
    <location>
        <begin position="1"/>
        <end position="220"/>
    </location>
</feature>
<feature type="active site" evidence="3">
    <location>
        <position position="11"/>
    </location>
</feature>
<feature type="active site" evidence="3">
    <location>
        <position position="119"/>
    </location>
</feature>
<feature type="active site" description="Nucleophile" evidence="3">
    <location>
        <position position="163"/>
    </location>
</feature>
<feature type="binding site" evidence="2">
    <location>
        <position position="53"/>
    </location>
    <ligand>
        <name>Zn(2+)</name>
        <dbReference type="ChEBI" id="CHEBI:29105"/>
    </ligand>
</feature>
<feature type="binding site" evidence="2">
    <location>
        <position position="55"/>
    </location>
    <ligand>
        <name>Zn(2+)</name>
        <dbReference type="ChEBI" id="CHEBI:29105"/>
    </ligand>
</feature>
<feature type="binding site" evidence="2">
    <location>
        <position position="94"/>
    </location>
    <ligand>
        <name>Zn(2+)</name>
        <dbReference type="ChEBI" id="CHEBI:29105"/>
    </ligand>
</feature>